<dbReference type="EC" id="7.1.1.-" evidence="1"/>
<dbReference type="EMBL" id="AE017180">
    <property type="protein sequence ID" value="AAR33681.1"/>
    <property type="molecule type" value="Genomic_DNA"/>
</dbReference>
<dbReference type="RefSeq" id="NP_951408.1">
    <property type="nucleotide sequence ID" value="NC_002939.5"/>
</dbReference>
<dbReference type="SMR" id="Q74G98"/>
<dbReference type="STRING" id="243231.GSU0348"/>
<dbReference type="EnsemblBacteria" id="AAR33681">
    <property type="protein sequence ID" value="AAR33681"/>
    <property type="gene ID" value="GSU0348"/>
</dbReference>
<dbReference type="KEGG" id="gsu:GSU0348"/>
<dbReference type="PATRIC" id="fig|243231.5.peg.345"/>
<dbReference type="eggNOG" id="COG0713">
    <property type="taxonomic scope" value="Bacteria"/>
</dbReference>
<dbReference type="HOGENOM" id="CLU_144724_0_0_7"/>
<dbReference type="InParanoid" id="Q74G98"/>
<dbReference type="OrthoDB" id="9810120at2"/>
<dbReference type="Proteomes" id="UP000000577">
    <property type="component" value="Chromosome"/>
</dbReference>
<dbReference type="GO" id="GO:0030964">
    <property type="term" value="C:NADH dehydrogenase complex"/>
    <property type="evidence" value="ECO:0000318"/>
    <property type="project" value="GO_Central"/>
</dbReference>
<dbReference type="GO" id="GO:0005886">
    <property type="term" value="C:plasma membrane"/>
    <property type="evidence" value="ECO:0007669"/>
    <property type="project" value="UniProtKB-SubCell"/>
</dbReference>
<dbReference type="GO" id="GO:0050136">
    <property type="term" value="F:NADH:ubiquinone reductase (non-electrogenic) activity"/>
    <property type="evidence" value="ECO:0007669"/>
    <property type="project" value="UniProtKB-UniRule"/>
</dbReference>
<dbReference type="GO" id="GO:0048038">
    <property type="term" value="F:quinone binding"/>
    <property type="evidence" value="ECO:0007669"/>
    <property type="project" value="UniProtKB-KW"/>
</dbReference>
<dbReference type="GO" id="GO:0042773">
    <property type="term" value="P:ATP synthesis coupled electron transport"/>
    <property type="evidence" value="ECO:0007669"/>
    <property type="project" value="InterPro"/>
</dbReference>
<dbReference type="FunFam" id="1.10.287.3510:FF:000001">
    <property type="entry name" value="NADH-quinone oxidoreductase subunit K"/>
    <property type="match status" value="1"/>
</dbReference>
<dbReference type="Gene3D" id="1.10.287.3510">
    <property type="match status" value="1"/>
</dbReference>
<dbReference type="HAMAP" id="MF_01456">
    <property type="entry name" value="NDH1_NuoK"/>
    <property type="match status" value="1"/>
</dbReference>
<dbReference type="InterPro" id="IPR001133">
    <property type="entry name" value="NADH_UbQ_OxRdtase_chain4L/K"/>
</dbReference>
<dbReference type="InterPro" id="IPR039428">
    <property type="entry name" value="NUOK/Mnh_C1-like"/>
</dbReference>
<dbReference type="NCBIfam" id="NF004320">
    <property type="entry name" value="PRK05715.1-2"/>
    <property type="match status" value="1"/>
</dbReference>
<dbReference type="NCBIfam" id="NF004321">
    <property type="entry name" value="PRK05715.1-3"/>
    <property type="match status" value="1"/>
</dbReference>
<dbReference type="NCBIfam" id="NF004323">
    <property type="entry name" value="PRK05715.1-5"/>
    <property type="match status" value="1"/>
</dbReference>
<dbReference type="PANTHER" id="PTHR11434:SF21">
    <property type="entry name" value="NADH DEHYDROGENASE SUBUNIT 4L-RELATED"/>
    <property type="match status" value="1"/>
</dbReference>
<dbReference type="PANTHER" id="PTHR11434">
    <property type="entry name" value="NADH-UBIQUINONE OXIDOREDUCTASE SUBUNIT ND4L"/>
    <property type="match status" value="1"/>
</dbReference>
<dbReference type="Pfam" id="PF00420">
    <property type="entry name" value="Oxidored_q2"/>
    <property type="match status" value="1"/>
</dbReference>
<organism>
    <name type="scientific">Geobacter sulfurreducens (strain ATCC 51573 / DSM 12127 / PCA)</name>
    <dbReference type="NCBI Taxonomy" id="243231"/>
    <lineage>
        <taxon>Bacteria</taxon>
        <taxon>Pseudomonadati</taxon>
        <taxon>Thermodesulfobacteriota</taxon>
        <taxon>Desulfuromonadia</taxon>
        <taxon>Geobacterales</taxon>
        <taxon>Geobacteraceae</taxon>
        <taxon>Geobacter</taxon>
    </lineage>
</organism>
<reference key="1">
    <citation type="journal article" date="2003" name="Science">
        <title>Genome of Geobacter sulfurreducens: metal reduction in subsurface environments.</title>
        <authorList>
            <person name="Methe B.A."/>
            <person name="Nelson K.E."/>
            <person name="Eisen J.A."/>
            <person name="Paulsen I.T."/>
            <person name="Nelson W.C."/>
            <person name="Heidelberg J.F."/>
            <person name="Wu D."/>
            <person name="Wu M."/>
            <person name="Ward N.L."/>
            <person name="Beanan M.J."/>
            <person name="Dodson R.J."/>
            <person name="Madupu R."/>
            <person name="Brinkac L.M."/>
            <person name="Daugherty S.C."/>
            <person name="DeBoy R.T."/>
            <person name="Durkin A.S."/>
            <person name="Gwinn M.L."/>
            <person name="Kolonay J.F."/>
            <person name="Sullivan S.A."/>
            <person name="Haft D.H."/>
            <person name="Selengut J."/>
            <person name="Davidsen T.M."/>
            <person name="Zafar N."/>
            <person name="White O."/>
            <person name="Tran B."/>
            <person name="Romero C."/>
            <person name="Forberger H.A."/>
            <person name="Weidman J.F."/>
            <person name="Khouri H.M."/>
            <person name="Feldblyum T.V."/>
            <person name="Utterback T.R."/>
            <person name="Van Aken S.E."/>
            <person name="Lovley D.R."/>
            <person name="Fraser C.M."/>
        </authorList>
    </citation>
    <scope>NUCLEOTIDE SEQUENCE [LARGE SCALE GENOMIC DNA]</scope>
    <source>
        <strain>ATCC 51573 / DSM 12127 / PCA</strain>
    </source>
</reference>
<name>NUOK1_GEOSL</name>
<accession>Q74G98</accession>
<keyword id="KW-0997">Cell inner membrane</keyword>
<keyword id="KW-1003">Cell membrane</keyword>
<keyword id="KW-0472">Membrane</keyword>
<keyword id="KW-0520">NAD</keyword>
<keyword id="KW-0874">Quinone</keyword>
<keyword id="KW-1185">Reference proteome</keyword>
<keyword id="KW-1278">Translocase</keyword>
<keyword id="KW-0812">Transmembrane</keyword>
<keyword id="KW-1133">Transmembrane helix</keyword>
<keyword id="KW-0813">Transport</keyword>
<keyword id="KW-0830">Ubiquinone</keyword>
<comment type="function">
    <text evidence="1">NDH-1 shuttles electrons from NADH, via FMN and iron-sulfur (Fe-S) centers, to quinones in the respiratory chain. The immediate electron acceptor for the enzyme in this species is believed to be ubiquinone. Couples the redox reaction to proton translocation (for every two electrons transferred, four hydrogen ions are translocated across the cytoplasmic membrane), and thus conserves the redox energy in a proton gradient.</text>
</comment>
<comment type="catalytic activity">
    <reaction evidence="1">
        <text>a quinone + NADH + 5 H(+)(in) = a quinol + NAD(+) + 4 H(+)(out)</text>
        <dbReference type="Rhea" id="RHEA:57888"/>
        <dbReference type="ChEBI" id="CHEBI:15378"/>
        <dbReference type="ChEBI" id="CHEBI:24646"/>
        <dbReference type="ChEBI" id="CHEBI:57540"/>
        <dbReference type="ChEBI" id="CHEBI:57945"/>
        <dbReference type="ChEBI" id="CHEBI:132124"/>
    </reaction>
</comment>
<comment type="subunit">
    <text evidence="1">NDH-1 is composed of 14 different subunits. Subunits NuoA, H, J, K, L, M, N constitute the membrane sector of the complex.</text>
</comment>
<comment type="subcellular location">
    <subcellularLocation>
        <location evidence="1">Cell inner membrane</location>
        <topology evidence="1">Multi-pass membrane protein</topology>
    </subcellularLocation>
</comment>
<comment type="similarity">
    <text evidence="1">Belongs to the complex I subunit 4L family.</text>
</comment>
<sequence length="100" mass="11024">MVSLHSYLIVSAILFSIGTIGVLVRRNAIVIFMCVEMMLNAVNLTFIALSRHLGNIDGQIFVFFVMTVAAAEAAVGLALMIAFYKNRESIDVEDVKLMKL</sequence>
<proteinExistence type="inferred from homology"/>
<feature type="chain" id="PRO_0000390082" description="NADH-quinone oxidoreductase subunit K 1">
    <location>
        <begin position="1"/>
        <end position="100"/>
    </location>
</feature>
<feature type="transmembrane region" description="Helical" evidence="1">
    <location>
        <begin position="4"/>
        <end position="24"/>
    </location>
</feature>
<feature type="transmembrane region" description="Helical" evidence="1">
    <location>
        <begin position="29"/>
        <end position="49"/>
    </location>
</feature>
<feature type="transmembrane region" description="Helical" evidence="1">
    <location>
        <begin position="60"/>
        <end position="80"/>
    </location>
</feature>
<evidence type="ECO:0000255" key="1">
    <source>
        <dbReference type="HAMAP-Rule" id="MF_01456"/>
    </source>
</evidence>
<gene>
    <name evidence="1" type="primary">nuoK1</name>
    <name type="ordered locus">GSU0348</name>
</gene>
<protein>
    <recommendedName>
        <fullName evidence="1">NADH-quinone oxidoreductase subunit K 1</fullName>
        <ecNumber evidence="1">7.1.1.-</ecNumber>
    </recommendedName>
    <alternativeName>
        <fullName evidence="1">NADH dehydrogenase I subunit K 1</fullName>
    </alternativeName>
    <alternativeName>
        <fullName evidence="1">NDH-1 subunit K 1</fullName>
    </alternativeName>
</protein>